<proteinExistence type="evidence at transcript level"/>
<protein>
    <recommendedName>
        <fullName>Presenilin-associated rhomboid-like protein, mitochondrial</fullName>
        <ecNumber evidence="3">3.4.21.105</ecNumber>
    </recommendedName>
    <alternativeName>
        <fullName>Mitochondrial intramembrane-cleaving protease PARL</fullName>
    </alternativeName>
    <component>
        <recommendedName>
            <fullName>P-beta</fullName>
            <shortName>Pbeta</shortName>
        </recommendedName>
    </component>
</protein>
<evidence type="ECO:0000250" key="1"/>
<evidence type="ECO:0000250" key="2">
    <source>
        <dbReference type="UniProtKB" id="Q5XJY4"/>
    </source>
</evidence>
<evidence type="ECO:0000250" key="3">
    <source>
        <dbReference type="UniProtKB" id="Q9H300"/>
    </source>
</evidence>
<evidence type="ECO:0000255" key="4"/>
<evidence type="ECO:0000305" key="5"/>
<dbReference type="EC" id="3.4.21.105" evidence="3"/>
<dbReference type="EMBL" id="CR860885">
    <property type="protein sequence ID" value="CAH92992.1"/>
    <property type="molecule type" value="mRNA"/>
</dbReference>
<dbReference type="RefSeq" id="NP_001126768.1">
    <property type="nucleotide sequence ID" value="NM_001133296.1"/>
</dbReference>
<dbReference type="SMR" id="Q5R5H4"/>
<dbReference type="FunCoup" id="Q5R5H4">
    <property type="interactions" value="2960"/>
</dbReference>
<dbReference type="STRING" id="9601.ENSPPYP00000024436"/>
<dbReference type="MEROPS" id="S54.009"/>
<dbReference type="Ensembl" id="ENSPPYT00000016678.2">
    <property type="protein sequence ID" value="ENSPPYP00000016034.1"/>
    <property type="gene ID" value="ENSPPYG00000014338.3"/>
</dbReference>
<dbReference type="GeneID" id="100173771"/>
<dbReference type="KEGG" id="pon:100173771"/>
<dbReference type="CTD" id="55486"/>
<dbReference type="eggNOG" id="KOG2980">
    <property type="taxonomic scope" value="Eukaryota"/>
</dbReference>
<dbReference type="GeneTree" id="ENSGT00390000013063"/>
<dbReference type="HOGENOM" id="CLU_034022_0_1_1"/>
<dbReference type="InParanoid" id="Q5R5H4"/>
<dbReference type="OrthoDB" id="10260614at2759"/>
<dbReference type="Proteomes" id="UP000001595">
    <property type="component" value="Chromosome 3"/>
</dbReference>
<dbReference type="GO" id="GO:0005743">
    <property type="term" value="C:mitochondrial inner membrane"/>
    <property type="evidence" value="ECO:0007669"/>
    <property type="project" value="UniProtKB-SubCell"/>
</dbReference>
<dbReference type="GO" id="GO:0005634">
    <property type="term" value="C:nucleus"/>
    <property type="evidence" value="ECO:0007669"/>
    <property type="project" value="UniProtKB-SubCell"/>
</dbReference>
<dbReference type="GO" id="GO:0004252">
    <property type="term" value="F:serine-type endopeptidase activity"/>
    <property type="evidence" value="ECO:0000250"/>
    <property type="project" value="UniProtKB"/>
</dbReference>
<dbReference type="GO" id="GO:0016485">
    <property type="term" value="P:protein processing"/>
    <property type="evidence" value="ECO:0000250"/>
    <property type="project" value="UniProtKB"/>
</dbReference>
<dbReference type="GO" id="GO:0006465">
    <property type="term" value="P:signal peptide processing"/>
    <property type="evidence" value="ECO:0007669"/>
    <property type="project" value="TreeGrafter"/>
</dbReference>
<dbReference type="FunFam" id="1.20.1540.10:FF:000005">
    <property type="entry name" value="Presenilins-associated rhomboid-like protein, mitochondrial"/>
    <property type="match status" value="1"/>
</dbReference>
<dbReference type="Gene3D" id="1.20.1540.10">
    <property type="entry name" value="Rhomboid-like"/>
    <property type="match status" value="1"/>
</dbReference>
<dbReference type="InterPro" id="IPR022764">
    <property type="entry name" value="Peptidase_S54_rhomboid_dom"/>
</dbReference>
<dbReference type="InterPro" id="IPR035952">
    <property type="entry name" value="Rhomboid-like_sf"/>
</dbReference>
<dbReference type="InterPro" id="IPR050925">
    <property type="entry name" value="Rhomboid_protease_S54"/>
</dbReference>
<dbReference type="PANTHER" id="PTHR43731:SF14">
    <property type="entry name" value="PRESENILIN-ASSOCIATED RHOMBOID-LIKE PROTEIN, MITOCHONDRIAL"/>
    <property type="match status" value="1"/>
</dbReference>
<dbReference type="PANTHER" id="PTHR43731">
    <property type="entry name" value="RHOMBOID PROTEASE"/>
    <property type="match status" value="1"/>
</dbReference>
<dbReference type="Pfam" id="PF01694">
    <property type="entry name" value="Rhomboid"/>
    <property type="match status" value="1"/>
</dbReference>
<dbReference type="SUPFAM" id="SSF144091">
    <property type="entry name" value="Rhomboid-like"/>
    <property type="match status" value="1"/>
</dbReference>
<feature type="transit peptide" description="Mitochondrion" evidence="4">
    <location>
        <begin position="1"/>
        <end position="52"/>
    </location>
</feature>
<feature type="chain" id="PRO_0000027390" description="Presenilin-associated rhomboid-like protein, mitochondrial">
    <location>
        <begin position="53"/>
        <end position="379"/>
    </location>
</feature>
<feature type="peptide" id="PRO_0000027391" description="P-beta" evidence="1">
    <location>
        <begin position="53"/>
        <end position="77"/>
    </location>
</feature>
<feature type="topological domain" description="Mitochondrial matrix" evidence="4">
    <location>
        <begin position="53"/>
        <end position="101"/>
    </location>
</feature>
<feature type="transmembrane region" description="Helical" evidence="4">
    <location>
        <begin position="102"/>
        <end position="121"/>
    </location>
</feature>
<feature type="topological domain" description="Mitochondrial intermembrane" evidence="4">
    <location>
        <begin position="122"/>
        <end position="167"/>
    </location>
</feature>
<feature type="transmembrane region" description="Helical" evidence="4">
    <location>
        <begin position="168"/>
        <end position="187"/>
    </location>
</feature>
<feature type="topological domain" description="Mitochondrial matrix" evidence="4">
    <location>
        <begin position="188"/>
        <end position="207"/>
    </location>
</feature>
<feature type="transmembrane region" description="Helical" evidence="4">
    <location>
        <begin position="208"/>
        <end position="230"/>
    </location>
</feature>
<feature type="topological domain" description="Mitochondrial intermembrane" evidence="4">
    <location>
        <begin position="231"/>
        <end position="244"/>
    </location>
</feature>
<feature type="transmembrane region" description="Helical" evidence="4">
    <location>
        <begin position="245"/>
        <end position="262"/>
    </location>
</feature>
<feature type="topological domain" description="Mitochondrial matrix" evidence="4">
    <location>
        <begin position="263"/>
        <end position="273"/>
    </location>
</feature>
<feature type="transmembrane region" description="Helical" evidence="4">
    <location>
        <begin position="274"/>
        <end position="292"/>
    </location>
</feature>
<feature type="topological domain" description="Mitochondrial intermembrane" evidence="4">
    <location>
        <begin position="293"/>
        <end position="295"/>
    </location>
</feature>
<feature type="transmembrane region" description="Helical" evidence="4">
    <location>
        <begin position="296"/>
        <end position="318"/>
    </location>
</feature>
<feature type="topological domain" description="Mitochondrial matrix" evidence="4">
    <location>
        <begin position="319"/>
        <end position="332"/>
    </location>
</feature>
<feature type="transmembrane region" description="Helical" evidence="4">
    <location>
        <begin position="333"/>
        <end position="354"/>
    </location>
</feature>
<feature type="topological domain" description="Mitochondrial intermembrane" evidence="4">
    <location>
        <begin position="355"/>
        <end position="379"/>
    </location>
</feature>
<feature type="active site" description="Nucleophile" evidence="1">
    <location>
        <position position="277"/>
    </location>
</feature>
<feature type="active site" evidence="1">
    <location>
        <position position="335"/>
    </location>
</feature>
<feature type="modified residue" description="Phosphoserine" evidence="3">
    <location>
        <position position="65"/>
    </location>
</feature>
<feature type="modified residue" description="Phosphothreonine" evidence="3">
    <location>
        <position position="69"/>
    </location>
</feature>
<feature type="modified residue" description="Phosphoserine" evidence="3">
    <location>
        <position position="70"/>
    </location>
</feature>
<sequence length="379" mass="42208">MAWRGWAQRGWGCGQAWAASVGGRSCEELTAALTPPRLLGRRFNFFIQQKCGFRKAPRKVEPRRSDTGTSGEAYKRSALIPPVEETVFYPSPYPIRSLIKPLFFTVGFTGCAFGSAAIWQYESLKSRVQSYFDGIKADWLDSIRPQKEGDFRKEINKWWNNLSDGQRTVTGIIAANVLVFCLWRVPSLQRTMIRYFTSNPASKVLCSPMLLSTFSHFSLFHMAANMYVLWSFSSSIVNILGQEQFMAVYLSAGVISNFVSYVGKVATGRYGPSLGASGAIMTVLAAVCTKIPEGRLAIIFLPMFTFTAGNALKAIIAMDTAGMILGWKFFDHAAHLGGALFGIWYVTYGHELIWKNREPLVKIWHEIRTNGPKKGGGSK</sequence>
<accession>Q5R5H4</accession>
<reference key="1">
    <citation type="submission" date="2004-11" db="EMBL/GenBank/DDBJ databases">
        <authorList>
            <consortium name="The German cDNA consortium"/>
        </authorList>
    </citation>
    <scope>NUCLEOTIDE SEQUENCE [LARGE SCALE MRNA]</scope>
    <source>
        <tissue>Kidney</tissue>
    </source>
</reference>
<name>PARL_PONAB</name>
<gene>
    <name type="primary">PARL</name>
    <name type="synonym">PSARL</name>
</gene>
<keyword id="KW-0378">Hydrolase</keyword>
<keyword id="KW-0472">Membrane</keyword>
<keyword id="KW-0496">Mitochondrion</keyword>
<keyword id="KW-0999">Mitochondrion inner membrane</keyword>
<keyword id="KW-0539">Nucleus</keyword>
<keyword id="KW-0597">Phosphoprotein</keyword>
<keyword id="KW-0645">Protease</keyword>
<keyword id="KW-1185">Reference proteome</keyword>
<keyword id="KW-0720">Serine protease</keyword>
<keyword id="KW-0809">Transit peptide</keyword>
<keyword id="KW-0812">Transmembrane</keyword>
<keyword id="KW-1133">Transmembrane helix</keyword>
<organism>
    <name type="scientific">Pongo abelii</name>
    <name type="common">Sumatran orangutan</name>
    <name type="synonym">Pongo pygmaeus abelii</name>
    <dbReference type="NCBI Taxonomy" id="9601"/>
    <lineage>
        <taxon>Eukaryota</taxon>
        <taxon>Metazoa</taxon>
        <taxon>Chordata</taxon>
        <taxon>Craniata</taxon>
        <taxon>Vertebrata</taxon>
        <taxon>Euteleostomi</taxon>
        <taxon>Mammalia</taxon>
        <taxon>Eutheria</taxon>
        <taxon>Euarchontoglires</taxon>
        <taxon>Primates</taxon>
        <taxon>Haplorrhini</taxon>
        <taxon>Catarrhini</taxon>
        <taxon>Hominidae</taxon>
        <taxon>Pongo</taxon>
    </lineage>
</organism>
<comment type="function">
    <text evidence="2 3">Required for the control of apoptosis during postnatal growth. Essential for proteolytic processing of an antiapoptotic form of OPA1 which prevents the release of mitochondrial cytochrome c in response to intrinsic apoptotic signals. Required for the maturation of PINK1 into its 52kDa mature form after its cleavage by mitochondrial-processing peptidase (MPP). Promotes cleavage of serine/threonine-protein phosphatase PGAM5 in damaged mitochondria in response to loss of mitochondrial membrane potential. Mediates differential cleavage of PINK1 and PGAM5 depending on the health status of mitochondria, disassociating from PINK1 and associating with PGAM5 in response to mitochondrial membrane potential loss. Required for processing of CLPB into a form with higher protein disaggregase activity by removing an autoinhibitory N-terminal peptide. Promotes processing of DIABLO/SMAC in the mitochondrion which is required for DIABLO apoptotic activity. Also required for cleavage of STARD7 and TTC19. Promotes changes in mitochondria morphology regulated by phosphorylation of P-beta domain.</text>
</comment>
<comment type="catalytic activity">
    <reaction evidence="3">
        <text>Cleaves type-1 transmembrane domains using a catalytic dyad composed of serine and histidine that are contributed by different transmembrane domains.</text>
        <dbReference type="EC" id="3.4.21.105"/>
    </reaction>
</comment>
<comment type="subunit">
    <text evidence="1">Interacts with PSEN1 and PSEN2. Binds OPA1 (By similarity).</text>
</comment>
<comment type="subcellular location">
    <subcellularLocation>
        <location evidence="3">Mitochondrion inner membrane</location>
        <topology evidence="3">Multi-pass membrane protein</topology>
    </subcellularLocation>
</comment>
<comment type="subcellular location">
    <molecule>P-beta</molecule>
    <subcellularLocation>
        <location evidence="3">Nucleus</location>
    </subcellularLocation>
    <text evidence="3">Translocated into the nucleus by an unknown mechanism.</text>
</comment>
<comment type="PTM">
    <text evidence="1">P-beta is proteolytically processed (beta-cleavage) in a PARL-dependent manner.</text>
</comment>
<comment type="similarity">
    <text evidence="5">Belongs to the peptidase S54 family.</text>
</comment>